<feature type="chain" id="PRO_0000303239" description="Histamine H4 receptor">
    <location>
        <begin position="1"/>
        <end position="391"/>
    </location>
</feature>
<feature type="topological domain" description="Extracellular" evidence="2">
    <location>
        <begin position="1"/>
        <end position="19"/>
    </location>
</feature>
<feature type="transmembrane region" description="Helical; Name=1" evidence="2">
    <location>
        <begin position="20"/>
        <end position="40"/>
    </location>
</feature>
<feature type="topological domain" description="Cytoplasmic" evidence="2">
    <location>
        <begin position="41"/>
        <end position="52"/>
    </location>
</feature>
<feature type="transmembrane region" description="Helical; Name=2" evidence="2">
    <location>
        <begin position="53"/>
        <end position="73"/>
    </location>
</feature>
<feature type="topological domain" description="Extracellular" evidence="2">
    <location>
        <begin position="74"/>
        <end position="87"/>
    </location>
</feature>
<feature type="transmembrane region" description="Helical; Name=3" evidence="2">
    <location>
        <begin position="88"/>
        <end position="108"/>
    </location>
</feature>
<feature type="topological domain" description="Cytoplasmic" evidence="2">
    <location>
        <begin position="109"/>
        <end position="131"/>
    </location>
</feature>
<feature type="transmembrane region" description="Helical; Name=4" evidence="2">
    <location>
        <begin position="132"/>
        <end position="152"/>
    </location>
</feature>
<feature type="topological domain" description="Extracellular" evidence="2">
    <location>
        <begin position="153"/>
        <end position="174"/>
    </location>
</feature>
<feature type="transmembrane region" description="Helical; Name=5" evidence="2">
    <location>
        <begin position="175"/>
        <end position="195"/>
    </location>
</feature>
<feature type="topological domain" description="Cytoplasmic" evidence="2">
    <location>
        <begin position="196"/>
        <end position="306"/>
    </location>
</feature>
<feature type="transmembrane region" description="Helical; Name=6" evidence="2">
    <location>
        <begin position="307"/>
        <end position="327"/>
    </location>
</feature>
<feature type="topological domain" description="Extracellular" evidence="2">
    <location>
        <begin position="328"/>
        <end position="343"/>
    </location>
</feature>
<feature type="transmembrane region" description="Helical; Name=7" evidence="2">
    <location>
        <begin position="344"/>
        <end position="364"/>
    </location>
</feature>
<feature type="topological domain" description="Cytoplasmic" evidence="2">
    <location>
        <begin position="365"/>
        <end position="391"/>
    </location>
</feature>
<feature type="glycosylation site" description="N-linked (GlcNAc...) asparagine" evidence="2">
    <location>
        <position position="5"/>
    </location>
</feature>
<feature type="glycosylation site" description="N-linked (GlcNAc...) asparagine" evidence="2">
    <location>
        <position position="159"/>
    </location>
</feature>
<feature type="disulfide bond" evidence="3">
    <location>
        <begin position="87"/>
        <end position="166"/>
    </location>
</feature>
<evidence type="ECO:0000250" key="1">
    <source>
        <dbReference type="UniProtKB" id="Q9H3N8"/>
    </source>
</evidence>
<evidence type="ECO:0000255" key="2"/>
<evidence type="ECO:0000255" key="3">
    <source>
        <dbReference type="PROSITE-ProRule" id="PRU00521"/>
    </source>
</evidence>
<comment type="function">
    <text evidence="1">The H4 subclass of histamine receptors could mediate the histamine signals in peripheral tissues. Displays a significant level of constitutive activity (spontaneous activity in the absence of agonist).</text>
</comment>
<comment type="subunit">
    <text evidence="1">Interacts with TSPAN4.</text>
</comment>
<comment type="subcellular location">
    <subcellularLocation>
        <location evidence="1">Cell membrane</location>
        <topology evidence="1">Multi-pass membrane protein</topology>
    </subcellularLocation>
</comment>
<comment type="similarity">
    <text evidence="3">Belongs to the G-protein coupled receptor 1 family.</text>
</comment>
<protein>
    <recommendedName>
        <fullName>Histamine H4 receptor</fullName>
        <shortName>H4R</shortName>
        <shortName>HH4R</shortName>
    </recommendedName>
</protein>
<gene>
    <name type="primary">Hrh4</name>
</gene>
<reference key="1">
    <citation type="submission" date="2001-03" db="EMBL/GenBank/DDBJ databases">
        <title>Comparison of human, mouse, rat, and guinea pig histamine H4 receptor suggests substantial species variation.</title>
        <authorList>
            <person name="Liu C."/>
            <person name="Wilson S."/>
            <person name="Kuei C."/>
            <person name="Lovenberg T.W."/>
        </authorList>
    </citation>
    <scope>NUCLEOTIDE SEQUENCE [MRNA]</scope>
    <source>
        <strain>Sprague-Dawley</strain>
    </source>
</reference>
<keyword id="KW-1003">Cell membrane</keyword>
<keyword id="KW-1015">Disulfide bond</keyword>
<keyword id="KW-0297">G-protein coupled receptor</keyword>
<keyword id="KW-0325">Glycoprotein</keyword>
<keyword id="KW-0472">Membrane</keyword>
<keyword id="KW-0675">Receptor</keyword>
<keyword id="KW-1185">Reference proteome</keyword>
<keyword id="KW-0807">Transducer</keyword>
<keyword id="KW-0812">Transmembrane</keyword>
<keyword id="KW-1133">Transmembrane helix</keyword>
<dbReference type="EMBL" id="AF358860">
    <property type="protein sequence ID" value="AAK97381.1"/>
    <property type="molecule type" value="mRNA"/>
</dbReference>
<dbReference type="RefSeq" id="NP_571984.1">
    <property type="nucleotide sequence ID" value="NM_131909.1"/>
</dbReference>
<dbReference type="SMR" id="Q91ZY1"/>
<dbReference type="FunCoup" id="Q91ZY1">
    <property type="interactions" value="125"/>
</dbReference>
<dbReference type="STRING" id="10116.ENSRNOP00000022744"/>
<dbReference type="BindingDB" id="Q91ZY1"/>
<dbReference type="ChEMBL" id="CHEMBL4468"/>
<dbReference type="DrugCentral" id="Q91ZY1"/>
<dbReference type="GuidetoPHARMACOLOGY" id="265"/>
<dbReference type="GlyCosmos" id="Q91ZY1">
    <property type="glycosylation" value="2 sites, No reported glycans"/>
</dbReference>
<dbReference type="GlyGen" id="Q91ZY1">
    <property type="glycosylation" value="2 sites"/>
</dbReference>
<dbReference type="PhosphoSitePlus" id="Q91ZY1"/>
<dbReference type="PaxDb" id="10116-ENSRNOP00000022744"/>
<dbReference type="GeneID" id="170704"/>
<dbReference type="KEGG" id="rno:170704"/>
<dbReference type="AGR" id="RGD:620631"/>
<dbReference type="CTD" id="59340"/>
<dbReference type="RGD" id="620631">
    <property type="gene designation" value="Hrh4"/>
</dbReference>
<dbReference type="eggNOG" id="KOG3656">
    <property type="taxonomic scope" value="Eukaryota"/>
</dbReference>
<dbReference type="InParanoid" id="Q91ZY1"/>
<dbReference type="OrthoDB" id="10071887at2759"/>
<dbReference type="PhylomeDB" id="Q91ZY1"/>
<dbReference type="Reactome" id="R-RNO-390650">
    <property type="pathway name" value="Histamine receptors"/>
</dbReference>
<dbReference type="Reactome" id="R-RNO-418594">
    <property type="pathway name" value="G alpha (i) signalling events"/>
</dbReference>
<dbReference type="PRO" id="PR:Q91ZY1"/>
<dbReference type="Proteomes" id="UP000002494">
    <property type="component" value="Unplaced"/>
</dbReference>
<dbReference type="GO" id="GO:0030425">
    <property type="term" value="C:dendrite"/>
    <property type="evidence" value="ECO:0000318"/>
    <property type="project" value="GO_Central"/>
</dbReference>
<dbReference type="GO" id="GO:0016020">
    <property type="term" value="C:membrane"/>
    <property type="evidence" value="ECO:0000266"/>
    <property type="project" value="RGD"/>
</dbReference>
<dbReference type="GO" id="GO:0005886">
    <property type="term" value="C:plasma membrane"/>
    <property type="evidence" value="ECO:0000318"/>
    <property type="project" value="GO_Central"/>
</dbReference>
<dbReference type="GO" id="GO:0045202">
    <property type="term" value="C:synapse"/>
    <property type="evidence" value="ECO:0000318"/>
    <property type="project" value="GO_Central"/>
</dbReference>
<dbReference type="GO" id="GO:0004969">
    <property type="term" value="F:histamine receptor activity"/>
    <property type="evidence" value="ECO:0000314"/>
    <property type="project" value="RGD"/>
</dbReference>
<dbReference type="GO" id="GO:0030594">
    <property type="term" value="F:neurotransmitter receptor activity"/>
    <property type="evidence" value="ECO:0000318"/>
    <property type="project" value="GO_Central"/>
</dbReference>
<dbReference type="GO" id="GO:0007197">
    <property type="term" value="P:adenylate cyclase-inhibiting G protein-coupled acetylcholine receptor signaling pathway"/>
    <property type="evidence" value="ECO:0000318"/>
    <property type="project" value="GO_Central"/>
</dbReference>
<dbReference type="GO" id="GO:0007268">
    <property type="term" value="P:chemical synaptic transmission"/>
    <property type="evidence" value="ECO:0000318"/>
    <property type="project" value="GO_Central"/>
</dbReference>
<dbReference type="GO" id="GO:0007187">
    <property type="term" value="P:G protein-coupled receptor signaling pathway, coupled to cyclic nucleotide second messenger"/>
    <property type="evidence" value="ECO:0000318"/>
    <property type="project" value="GO_Central"/>
</dbReference>
<dbReference type="GO" id="GO:0006954">
    <property type="term" value="P:inflammatory response"/>
    <property type="evidence" value="ECO:0007669"/>
    <property type="project" value="InterPro"/>
</dbReference>
<dbReference type="GO" id="GO:0007204">
    <property type="term" value="P:positive regulation of cytosolic calcium ion concentration"/>
    <property type="evidence" value="ECO:0007669"/>
    <property type="project" value="InterPro"/>
</dbReference>
<dbReference type="GO" id="GO:0043408">
    <property type="term" value="P:regulation of MAPK cascade"/>
    <property type="evidence" value="ECO:0007669"/>
    <property type="project" value="InterPro"/>
</dbReference>
<dbReference type="Gene3D" id="1.20.1070.10">
    <property type="entry name" value="Rhodopsin 7-helix transmembrane proteins"/>
    <property type="match status" value="1"/>
</dbReference>
<dbReference type="InterPro" id="IPR000276">
    <property type="entry name" value="GPCR_Rhodpsn"/>
</dbReference>
<dbReference type="InterPro" id="IPR017452">
    <property type="entry name" value="GPCR_Rhodpsn_7TM"/>
</dbReference>
<dbReference type="InterPro" id="IPR008102">
    <property type="entry name" value="Histamine_H4_rcpt"/>
</dbReference>
<dbReference type="PANTHER" id="PTHR24247">
    <property type="entry name" value="5-HYDROXYTRYPTAMINE RECEPTOR"/>
    <property type="match status" value="1"/>
</dbReference>
<dbReference type="PANTHER" id="PTHR24247:SF199">
    <property type="entry name" value="HISTAMINE H4 RECEPTOR"/>
    <property type="match status" value="1"/>
</dbReference>
<dbReference type="Pfam" id="PF00001">
    <property type="entry name" value="7tm_1"/>
    <property type="match status" value="1"/>
</dbReference>
<dbReference type="PRINTS" id="PR00237">
    <property type="entry name" value="GPCRRHODOPSN"/>
</dbReference>
<dbReference type="PRINTS" id="PR01726">
    <property type="entry name" value="HISTAMINEH4R"/>
</dbReference>
<dbReference type="SUPFAM" id="SSF81321">
    <property type="entry name" value="Family A G protein-coupled receptor-like"/>
    <property type="match status" value="1"/>
</dbReference>
<dbReference type="PROSITE" id="PS00237">
    <property type="entry name" value="G_PROTEIN_RECEP_F1_1"/>
    <property type="match status" value="1"/>
</dbReference>
<dbReference type="PROSITE" id="PS50262">
    <property type="entry name" value="G_PROTEIN_RECEP_F1_2"/>
    <property type="match status" value="1"/>
</dbReference>
<sequence>MSESNGTDVLPLTAQVPLAFLMSLLAFAITIGNAVVILAFVADRNLRHRSNYFFLNLAISDFFVGVISIPLYIPHTLFNWNFGSGICMFWLITDYLLCTASVYSIVLISYDRYQSVSNAVRYRAQHTGILKIVAQMVAVWILAFLVNGPMILASDSWKNSTNTEECEPGFVTEWYILAITAFLEFLLPVSLVVYFSVQIYWSLWKRGSLSRCPSHAGFIATSSRGTGHSRRTGLACRTSLPGLKEPAASLHSESPRGKSSLLVSLRTHMSGSIIAFKVGSFCRSESPVLHQREHVELLRGRKLARSLAVLLSAFAICWAPYCLFTIVLSTYRRGERPKSIWYSIAFWLQWFNSLINPFLYPLCHRRFQKAFWKILCVTKQPAPSQTQSVSS</sequence>
<accession>Q91ZY1</accession>
<name>HRH4_RAT</name>
<organism>
    <name type="scientific">Rattus norvegicus</name>
    <name type="common">Rat</name>
    <dbReference type="NCBI Taxonomy" id="10116"/>
    <lineage>
        <taxon>Eukaryota</taxon>
        <taxon>Metazoa</taxon>
        <taxon>Chordata</taxon>
        <taxon>Craniata</taxon>
        <taxon>Vertebrata</taxon>
        <taxon>Euteleostomi</taxon>
        <taxon>Mammalia</taxon>
        <taxon>Eutheria</taxon>
        <taxon>Euarchontoglires</taxon>
        <taxon>Glires</taxon>
        <taxon>Rodentia</taxon>
        <taxon>Myomorpha</taxon>
        <taxon>Muroidea</taxon>
        <taxon>Muridae</taxon>
        <taxon>Murinae</taxon>
        <taxon>Rattus</taxon>
    </lineage>
</organism>
<proteinExistence type="evidence at transcript level"/>